<dbReference type="EMBL" id="CH954181">
    <property type="protein sequence ID" value="EDV48962.1"/>
    <property type="molecule type" value="Genomic_DNA"/>
</dbReference>
<dbReference type="EnsemblMetazoa" id="FBtr0136947">
    <property type="protein sequence ID" value="FBpp0135439"/>
    <property type="gene ID" value="FBgn0109121"/>
</dbReference>
<dbReference type="EnsemblMetazoa" id="XM_001979968.3">
    <property type="protein sequence ID" value="XP_001980004.1"/>
    <property type="gene ID" value="LOC6552896"/>
</dbReference>
<dbReference type="GeneID" id="6552896"/>
<dbReference type="KEGG" id="der:6552896"/>
<dbReference type="CTD" id="23383"/>
<dbReference type="eggNOG" id="KOG2300">
    <property type="taxonomic scope" value="Eukaryota"/>
</dbReference>
<dbReference type="HOGENOM" id="CLU_030238_0_0_1"/>
<dbReference type="OMA" id="QDAWYLS"/>
<dbReference type="OrthoDB" id="5565328at2759"/>
<dbReference type="PhylomeDB" id="B3P0R4"/>
<dbReference type="Proteomes" id="UP000008711">
    <property type="component" value="Unassembled WGS sequence"/>
</dbReference>
<dbReference type="GO" id="GO:0000785">
    <property type="term" value="C:chromatin"/>
    <property type="evidence" value="ECO:0000250"/>
    <property type="project" value="UniProtKB"/>
</dbReference>
<dbReference type="GO" id="GO:0005654">
    <property type="term" value="C:nucleoplasm"/>
    <property type="evidence" value="ECO:0000250"/>
    <property type="project" value="UniProtKB"/>
</dbReference>
<dbReference type="GO" id="GO:0005634">
    <property type="term" value="C:nucleus"/>
    <property type="evidence" value="ECO:0000250"/>
    <property type="project" value="UniProtKB"/>
</dbReference>
<dbReference type="GO" id="GO:0032116">
    <property type="term" value="C:SMC loading complex"/>
    <property type="evidence" value="ECO:0000250"/>
    <property type="project" value="UniProtKB"/>
</dbReference>
<dbReference type="GO" id="GO:0051301">
    <property type="term" value="P:cell division"/>
    <property type="evidence" value="ECO:0007669"/>
    <property type="project" value="UniProtKB-KW"/>
</dbReference>
<dbReference type="GO" id="GO:0007059">
    <property type="term" value="P:chromosome segregation"/>
    <property type="evidence" value="ECO:0007669"/>
    <property type="project" value="UniProtKB-KW"/>
</dbReference>
<dbReference type="GO" id="GO:0034088">
    <property type="term" value="P:maintenance of mitotic sister chromatid cohesion"/>
    <property type="evidence" value="ECO:0000250"/>
    <property type="project" value="UniProtKB"/>
</dbReference>
<dbReference type="FunFam" id="1.25.40.10:FF:000373">
    <property type="entry name" value="MAU2 chromatid cohesion factor homolog"/>
    <property type="match status" value="1"/>
</dbReference>
<dbReference type="FunFam" id="1.25.40.10:FF:000915">
    <property type="entry name" value="MAU2 chromatid cohesion factor homolog"/>
    <property type="match status" value="1"/>
</dbReference>
<dbReference type="Gene3D" id="1.25.40.10">
    <property type="entry name" value="Tetratricopeptide repeat domain"/>
    <property type="match status" value="2"/>
</dbReference>
<dbReference type="InterPro" id="IPR019440">
    <property type="entry name" value="MAU2"/>
</dbReference>
<dbReference type="InterPro" id="IPR011990">
    <property type="entry name" value="TPR-like_helical_dom_sf"/>
</dbReference>
<dbReference type="PANTHER" id="PTHR21394">
    <property type="entry name" value="MAU2 CHROMATID COHESION FACTOR HOMOLOG"/>
    <property type="match status" value="1"/>
</dbReference>
<dbReference type="Pfam" id="PF10345">
    <property type="entry name" value="Cohesin_load"/>
    <property type="match status" value="1"/>
</dbReference>
<dbReference type="SUPFAM" id="SSF48452">
    <property type="entry name" value="TPR-like"/>
    <property type="match status" value="1"/>
</dbReference>
<sequence length="632" mass="71202">MSASTSTSTAASQDACYISLLGLAEYFRTSQPPNIKKCIQCLQALFTFMPPSKVEARTHLQMGQILMAYTKNIDLARQHLEKAWSISEPLPNFDVKFDTASLLAQLHLQTDRNSHQAKAMLRRAVELSQNNVYWHCKLLLQLSQIHASDREYSLASELLAVGAESADEASATYLKVLFLLSRAMILMIERKTNDVLALLNSAGQIIDNNIPNPHQKEYLKVFFLVLQVCYYLALGQVKTVKPSLKQLQMSIQTIMAPNWPSDEAIFGANQLEMFVWLPKEQLYVLVYLVTVSHSMMAGYMDKAQKYTEKALTQIEKLKQQEDKPILSVFKVILLEHIVMCRMVMGNRELAIREIAAARDVCMAAPQRSLLRRHSAQLHCLIGLYSMSTNLFEHAERQFVVCVSETSERDLKLFANLNLAIIYLRTKRDTDLKQILDAVSTENTHTYSSQALMGGFYYVQGLHAFHKNSFHEAKRFLRETLKMANAEDLNRLTSCSLVLLSHVFLSIGNSKESMNMVTPAMQLASKIPDIHVQLWGSAILKDLHRMSKDVQHEKDAYANHVKYSENLIADQRKCVQSAHHELVNWFQGDPPVTSGPPAAPVLLMPESSVTASVPVIASTSAAMQPAGQYGQFY</sequence>
<keyword id="KW-0131">Cell cycle</keyword>
<keyword id="KW-0132">Cell division</keyword>
<keyword id="KW-0159">Chromosome partition</keyword>
<keyword id="KW-0498">Mitosis</keyword>
<keyword id="KW-0539">Nucleus</keyword>
<keyword id="KW-0677">Repeat</keyword>
<keyword id="KW-0802">TPR repeat</keyword>
<protein>
    <recommendedName>
        <fullName>MAU2 chromatid cohesion factor homolog</fullName>
    </recommendedName>
    <alternativeName>
        <fullName>Cohesin loading complex subunit SCC4 homolog</fullName>
    </alternativeName>
</protein>
<organism>
    <name type="scientific">Drosophila erecta</name>
    <name type="common">Fruit fly</name>
    <dbReference type="NCBI Taxonomy" id="7220"/>
    <lineage>
        <taxon>Eukaryota</taxon>
        <taxon>Metazoa</taxon>
        <taxon>Ecdysozoa</taxon>
        <taxon>Arthropoda</taxon>
        <taxon>Hexapoda</taxon>
        <taxon>Insecta</taxon>
        <taxon>Pterygota</taxon>
        <taxon>Neoptera</taxon>
        <taxon>Endopterygota</taxon>
        <taxon>Diptera</taxon>
        <taxon>Brachycera</taxon>
        <taxon>Muscomorpha</taxon>
        <taxon>Ephydroidea</taxon>
        <taxon>Drosophilidae</taxon>
        <taxon>Drosophila</taxon>
        <taxon>Sophophora</taxon>
    </lineage>
</organism>
<accession>B3P0R4</accession>
<comment type="function">
    <text evidence="1">Required for association of the cohesin complex with chromatin during interphase. Plays a role in sister chromatid cohesion and normal progression through prometaphase (By similarity).</text>
</comment>
<comment type="subunit">
    <text evidence="1">Interacts with Nipped-B to form the cohesin loading complex.</text>
</comment>
<comment type="subcellular location">
    <subcellularLocation>
        <location evidence="1">Nucleus</location>
        <location evidence="1">Nucleoplasm</location>
    </subcellularLocation>
    <text evidence="1">Binds to chromatin from the end of mitosis until prophase.</text>
</comment>
<comment type="similarity">
    <text evidence="2">Belongs to the SCC4/mau-2 family.</text>
</comment>
<name>SCC4_DROER</name>
<evidence type="ECO:0000250" key="1"/>
<evidence type="ECO:0000305" key="2"/>
<proteinExistence type="inferred from homology"/>
<gene>
    <name type="ORF">GG16893</name>
</gene>
<feature type="chain" id="PRO_0000382730" description="MAU2 chromatid cohesion factor homolog">
    <location>
        <begin position="1"/>
        <end position="632"/>
    </location>
</feature>
<feature type="repeat" description="TPR 1">
    <location>
        <begin position="453"/>
        <end position="486"/>
    </location>
</feature>
<feature type="repeat" description="TPR 2">
    <location>
        <begin position="493"/>
        <end position="526"/>
    </location>
</feature>
<reference key="1">
    <citation type="journal article" date="2007" name="Nature">
        <title>Evolution of genes and genomes on the Drosophila phylogeny.</title>
        <authorList>
            <consortium name="Drosophila 12 genomes consortium"/>
        </authorList>
    </citation>
    <scope>NUCLEOTIDE SEQUENCE [LARGE SCALE GENOMIC DNA]</scope>
    <source>
        <strain>Tucson 14021-0224.01</strain>
    </source>
</reference>